<name>RPOC_ACICJ</name>
<accession>A5FZX0</accession>
<gene>
    <name evidence="1" type="primary">rpoC</name>
    <name type="ordered locus">Acry_1951</name>
</gene>
<keyword id="KW-0240">DNA-directed RNA polymerase</keyword>
<keyword id="KW-0460">Magnesium</keyword>
<keyword id="KW-0479">Metal-binding</keyword>
<keyword id="KW-0548">Nucleotidyltransferase</keyword>
<keyword id="KW-1185">Reference proteome</keyword>
<keyword id="KW-0804">Transcription</keyword>
<keyword id="KW-0808">Transferase</keyword>
<keyword id="KW-0862">Zinc</keyword>
<proteinExistence type="inferred from homology"/>
<comment type="function">
    <text evidence="1">DNA-dependent RNA polymerase catalyzes the transcription of DNA into RNA using the four ribonucleoside triphosphates as substrates.</text>
</comment>
<comment type="catalytic activity">
    <reaction evidence="1">
        <text>RNA(n) + a ribonucleoside 5'-triphosphate = RNA(n+1) + diphosphate</text>
        <dbReference type="Rhea" id="RHEA:21248"/>
        <dbReference type="Rhea" id="RHEA-COMP:14527"/>
        <dbReference type="Rhea" id="RHEA-COMP:17342"/>
        <dbReference type="ChEBI" id="CHEBI:33019"/>
        <dbReference type="ChEBI" id="CHEBI:61557"/>
        <dbReference type="ChEBI" id="CHEBI:140395"/>
        <dbReference type="EC" id="2.7.7.6"/>
    </reaction>
</comment>
<comment type="cofactor">
    <cofactor evidence="1">
        <name>Mg(2+)</name>
        <dbReference type="ChEBI" id="CHEBI:18420"/>
    </cofactor>
    <text evidence="1">Binds 1 Mg(2+) ion per subunit.</text>
</comment>
<comment type="cofactor">
    <cofactor evidence="1">
        <name>Zn(2+)</name>
        <dbReference type="ChEBI" id="CHEBI:29105"/>
    </cofactor>
    <text evidence="1">Binds 2 Zn(2+) ions per subunit.</text>
</comment>
<comment type="subunit">
    <text evidence="1">The RNAP catalytic core consists of 2 alpha, 1 beta, 1 beta' and 1 omega subunit. When a sigma factor is associated with the core the holoenzyme is formed, which can initiate transcription.</text>
</comment>
<comment type="similarity">
    <text evidence="1">Belongs to the RNA polymerase beta' chain family.</text>
</comment>
<dbReference type="EC" id="2.7.7.6" evidence="1"/>
<dbReference type="EMBL" id="CP000697">
    <property type="protein sequence ID" value="ABQ31152.1"/>
    <property type="molecule type" value="Genomic_DNA"/>
</dbReference>
<dbReference type="RefSeq" id="WP_012039721.1">
    <property type="nucleotide sequence ID" value="NC_009484.1"/>
</dbReference>
<dbReference type="SMR" id="A5FZX0"/>
<dbReference type="STRING" id="349163.Acry_1951"/>
<dbReference type="KEGG" id="acr:Acry_1951"/>
<dbReference type="eggNOG" id="COG0086">
    <property type="taxonomic scope" value="Bacteria"/>
</dbReference>
<dbReference type="HOGENOM" id="CLU_000524_3_1_5"/>
<dbReference type="Proteomes" id="UP000000245">
    <property type="component" value="Chromosome"/>
</dbReference>
<dbReference type="GO" id="GO:0000428">
    <property type="term" value="C:DNA-directed RNA polymerase complex"/>
    <property type="evidence" value="ECO:0007669"/>
    <property type="project" value="UniProtKB-KW"/>
</dbReference>
<dbReference type="GO" id="GO:0003677">
    <property type="term" value="F:DNA binding"/>
    <property type="evidence" value="ECO:0007669"/>
    <property type="project" value="UniProtKB-UniRule"/>
</dbReference>
<dbReference type="GO" id="GO:0003899">
    <property type="term" value="F:DNA-directed RNA polymerase activity"/>
    <property type="evidence" value="ECO:0007669"/>
    <property type="project" value="UniProtKB-UniRule"/>
</dbReference>
<dbReference type="GO" id="GO:0000287">
    <property type="term" value="F:magnesium ion binding"/>
    <property type="evidence" value="ECO:0007669"/>
    <property type="project" value="UniProtKB-UniRule"/>
</dbReference>
<dbReference type="GO" id="GO:0008270">
    <property type="term" value="F:zinc ion binding"/>
    <property type="evidence" value="ECO:0007669"/>
    <property type="project" value="UniProtKB-UniRule"/>
</dbReference>
<dbReference type="GO" id="GO:0006351">
    <property type="term" value="P:DNA-templated transcription"/>
    <property type="evidence" value="ECO:0007669"/>
    <property type="project" value="UniProtKB-UniRule"/>
</dbReference>
<dbReference type="CDD" id="cd02655">
    <property type="entry name" value="RNAP_beta'_C"/>
    <property type="match status" value="1"/>
</dbReference>
<dbReference type="CDD" id="cd01609">
    <property type="entry name" value="RNAP_beta'_N"/>
    <property type="match status" value="1"/>
</dbReference>
<dbReference type="FunFam" id="1.10.40.90:FF:000001">
    <property type="entry name" value="DNA-directed RNA polymerase subunit beta"/>
    <property type="match status" value="1"/>
</dbReference>
<dbReference type="Gene3D" id="1.10.132.30">
    <property type="match status" value="1"/>
</dbReference>
<dbReference type="Gene3D" id="1.10.150.390">
    <property type="match status" value="1"/>
</dbReference>
<dbReference type="Gene3D" id="1.10.1790.20">
    <property type="match status" value="1"/>
</dbReference>
<dbReference type="Gene3D" id="1.10.40.90">
    <property type="match status" value="1"/>
</dbReference>
<dbReference type="Gene3D" id="2.40.40.20">
    <property type="match status" value="1"/>
</dbReference>
<dbReference type="Gene3D" id="2.40.50.100">
    <property type="match status" value="3"/>
</dbReference>
<dbReference type="Gene3D" id="4.10.860.120">
    <property type="entry name" value="RNA polymerase II, clamp domain"/>
    <property type="match status" value="1"/>
</dbReference>
<dbReference type="Gene3D" id="1.10.274.100">
    <property type="entry name" value="RNA polymerase Rpb1, domain 3"/>
    <property type="match status" value="1"/>
</dbReference>
<dbReference type="HAMAP" id="MF_01322">
    <property type="entry name" value="RNApol_bact_RpoC"/>
    <property type="match status" value="1"/>
</dbReference>
<dbReference type="InterPro" id="IPR045867">
    <property type="entry name" value="DNA-dir_RpoC_beta_prime"/>
</dbReference>
<dbReference type="InterPro" id="IPR012754">
    <property type="entry name" value="DNA-dir_RpoC_beta_prime_bact"/>
</dbReference>
<dbReference type="InterPro" id="IPR000722">
    <property type="entry name" value="RNA_pol_asu"/>
</dbReference>
<dbReference type="InterPro" id="IPR006592">
    <property type="entry name" value="RNA_pol_N"/>
</dbReference>
<dbReference type="InterPro" id="IPR007080">
    <property type="entry name" value="RNA_pol_Rpb1_1"/>
</dbReference>
<dbReference type="InterPro" id="IPR007066">
    <property type="entry name" value="RNA_pol_Rpb1_3"/>
</dbReference>
<dbReference type="InterPro" id="IPR042102">
    <property type="entry name" value="RNA_pol_Rpb1_3_sf"/>
</dbReference>
<dbReference type="InterPro" id="IPR007083">
    <property type="entry name" value="RNA_pol_Rpb1_4"/>
</dbReference>
<dbReference type="InterPro" id="IPR007081">
    <property type="entry name" value="RNA_pol_Rpb1_5"/>
</dbReference>
<dbReference type="InterPro" id="IPR044893">
    <property type="entry name" value="RNA_pol_Rpb1_clamp_domain"/>
</dbReference>
<dbReference type="InterPro" id="IPR038120">
    <property type="entry name" value="Rpb1_funnel_sf"/>
</dbReference>
<dbReference type="NCBIfam" id="TIGR02386">
    <property type="entry name" value="rpoC_TIGR"/>
    <property type="match status" value="1"/>
</dbReference>
<dbReference type="PANTHER" id="PTHR19376">
    <property type="entry name" value="DNA-DIRECTED RNA POLYMERASE"/>
    <property type="match status" value="1"/>
</dbReference>
<dbReference type="PANTHER" id="PTHR19376:SF54">
    <property type="entry name" value="DNA-DIRECTED RNA POLYMERASE SUBUNIT BETA"/>
    <property type="match status" value="1"/>
</dbReference>
<dbReference type="Pfam" id="PF04997">
    <property type="entry name" value="RNA_pol_Rpb1_1"/>
    <property type="match status" value="1"/>
</dbReference>
<dbReference type="Pfam" id="PF00623">
    <property type="entry name" value="RNA_pol_Rpb1_2"/>
    <property type="match status" value="2"/>
</dbReference>
<dbReference type="Pfam" id="PF04983">
    <property type="entry name" value="RNA_pol_Rpb1_3"/>
    <property type="match status" value="1"/>
</dbReference>
<dbReference type="Pfam" id="PF05000">
    <property type="entry name" value="RNA_pol_Rpb1_4"/>
    <property type="match status" value="1"/>
</dbReference>
<dbReference type="Pfam" id="PF04998">
    <property type="entry name" value="RNA_pol_Rpb1_5"/>
    <property type="match status" value="1"/>
</dbReference>
<dbReference type="SMART" id="SM00663">
    <property type="entry name" value="RPOLA_N"/>
    <property type="match status" value="1"/>
</dbReference>
<dbReference type="SUPFAM" id="SSF64484">
    <property type="entry name" value="beta and beta-prime subunits of DNA dependent RNA-polymerase"/>
    <property type="match status" value="1"/>
</dbReference>
<protein>
    <recommendedName>
        <fullName evidence="1">DNA-directed RNA polymerase subunit beta'</fullName>
        <shortName evidence="1">RNAP subunit beta'</shortName>
        <ecNumber evidence="1">2.7.7.6</ecNumber>
    </recommendedName>
    <alternativeName>
        <fullName evidence="1">RNA polymerase subunit beta'</fullName>
    </alternativeName>
    <alternativeName>
        <fullName evidence="1">Transcriptase subunit beta'</fullName>
    </alternativeName>
</protein>
<feature type="chain" id="PRO_0000353271" description="DNA-directed RNA polymerase subunit beta'">
    <location>
        <begin position="1"/>
        <end position="1388"/>
    </location>
</feature>
<feature type="binding site" evidence="1">
    <location>
        <position position="70"/>
    </location>
    <ligand>
        <name>Zn(2+)</name>
        <dbReference type="ChEBI" id="CHEBI:29105"/>
        <label>1</label>
    </ligand>
</feature>
<feature type="binding site" evidence="1">
    <location>
        <position position="72"/>
    </location>
    <ligand>
        <name>Zn(2+)</name>
        <dbReference type="ChEBI" id="CHEBI:29105"/>
        <label>1</label>
    </ligand>
</feature>
<feature type="binding site" evidence="1">
    <location>
        <position position="85"/>
    </location>
    <ligand>
        <name>Zn(2+)</name>
        <dbReference type="ChEBI" id="CHEBI:29105"/>
        <label>1</label>
    </ligand>
</feature>
<feature type="binding site" evidence="1">
    <location>
        <position position="88"/>
    </location>
    <ligand>
        <name>Zn(2+)</name>
        <dbReference type="ChEBI" id="CHEBI:29105"/>
        <label>1</label>
    </ligand>
</feature>
<feature type="binding site" evidence="1">
    <location>
        <position position="461"/>
    </location>
    <ligand>
        <name>Mg(2+)</name>
        <dbReference type="ChEBI" id="CHEBI:18420"/>
    </ligand>
</feature>
<feature type="binding site" evidence="1">
    <location>
        <position position="463"/>
    </location>
    <ligand>
        <name>Mg(2+)</name>
        <dbReference type="ChEBI" id="CHEBI:18420"/>
    </ligand>
</feature>
<feature type="binding site" evidence="1">
    <location>
        <position position="465"/>
    </location>
    <ligand>
        <name>Mg(2+)</name>
        <dbReference type="ChEBI" id="CHEBI:18420"/>
    </ligand>
</feature>
<feature type="binding site" evidence="1">
    <location>
        <position position="808"/>
    </location>
    <ligand>
        <name>Zn(2+)</name>
        <dbReference type="ChEBI" id="CHEBI:29105"/>
        <label>2</label>
    </ligand>
</feature>
<feature type="binding site" evidence="1">
    <location>
        <position position="882"/>
    </location>
    <ligand>
        <name>Zn(2+)</name>
        <dbReference type="ChEBI" id="CHEBI:29105"/>
        <label>2</label>
    </ligand>
</feature>
<feature type="binding site" evidence="1">
    <location>
        <position position="889"/>
    </location>
    <ligand>
        <name>Zn(2+)</name>
        <dbReference type="ChEBI" id="CHEBI:29105"/>
        <label>2</label>
    </ligand>
</feature>
<feature type="binding site" evidence="1">
    <location>
        <position position="892"/>
    </location>
    <ligand>
        <name>Zn(2+)</name>
        <dbReference type="ChEBI" id="CHEBI:29105"/>
        <label>2</label>
    </ligand>
</feature>
<organism>
    <name type="scientific">Acidiphilium cryptum (strain JF-5)</name>
    <dbReference type="NCBI Taxonomy" id="349163"/>
    <lineage>
        <taxon>Bacteria</taxon>
        <taxon>Pseudomonadati</taxon>
        <taxon>Pseudomonadota</taxon>
        <taxon>Alphaproteobacteria</taxon>
        <taxon>Acetobacterales</taxon>
        <taxon>Acidocellaceae</taxon>
        <taxon>Acidiphilium</taxon>
    </lineage>
</organism>
<sequence length="1388" mass="153790">MNDLMKILGQTGQAATFDQIRIQIASPEQIRSWSYGEIKKPETINYRTFKPERDGLFCARIFGPIKDYECLCGKYKRMKFRGIICEKCGVEVTLAKVRRERMGHIELASPVAHIWFLKSLPSRIATMVEMTLKDLEKVLYFENYIVLDPYTTDLKRYQLLSEDDLYAKQDEFGEDGFKAGIGAEAVKSILAGIDLEAERAIMRADLKEATSEAKRKKLVKRLKLVEAFIESGTRPEWMIMDVVPVIPPELRPLVPLDGGRFATSDLNDLYRRVINRNNRLKRLIELRAPDIIVRNEKRMLQESVDALFDNGRRGRAITGTNKRPLKSLSDMLKGKQGRFRQNLLGKRVDYSGRSVIVVGPELKLHQCGLPKKMALELFKPFIYAKLEKYGLATTIKAAKRMVEKERPEVWDILEEVIREHPVLLNRAPTLHRLGIQAFEPILIEGKAIQLHPLVCTAFNADFDGDQMAVHVPLSIEAQLEARVLMMSTNNILNPANGKPIIVPSQDIVLGLYYLSLETPAFTGVEDKEAPLFGTMGEIEHALDSGYLKLHDKIRARVVRTHPDGSRTTEVVPTTPGRMMIGQLLPKHHDVPFALVNQLLTKKKVSDVIDAVYRHCGQKESVIFCDRLMGLGFRQAAKAGISFGKDDMVIPAEKYGLLEKTQAEVKEYEAQYHDGLITAGERYNKVIDAWSRCNDEVAAAMMREISRQDPGKPTNSVWMMSHSGARGSPTQMRQLAGMRGLMAKPSGEIIEQPILSNFKEGLTVAEYFNSTHGARKGLADTALKTANSGYLTRRLVDVAQDCIIVTADCGTERGLTMRAVMDGGEVVSSLSERILGRTAAEDVLDPADGSVIVKANELIGEIDSMHIEKLGVESVKIRSVLTCEAKVGVCAKCYGRDLARGTPVNIGEAVGVIAAQSIGEPGTQLTMRTFHIGGAAQRGAEQSSVEASHDGTVTIRNRNVVSNSAGAPIVMSRNCEIALNDASGRERARFRVPYGARLLVDEDQTVTRGQKLAEWDPYTLPIITERAGLVEYADLLEGVTLVERVDEVTGLTSKVVVDYKQSAKGADLRPRLILKDERGEVLRLANGAEARYFLSPDSILSVENGASVHAGDVLARIPREGSKTRDITGGLPRVAELFEARRPKDHAIIAETDGRVEFGKDYKAKRRIIVKNDETGEETEYLVPKGKHVSVQEGDYVHRGDPLVDGPRVPHDILRVLGVEALSEYLINEIQDVYRLQGVKINDKHIEVVVRQMLQKIEITEPGDTTYLVGELVDRIEFDEENERRLRAGERPAGGLPVLQGITKASLQTLSFISAASFQETTRVLTEAATAGKTDQLLGLKENVIVGRLIPAGTGSVMSRLRSIAAGRDRSTLAATRPALPARDEVSAD</sequence>
<reference key="1">
    <citation type="submission" date="2007-05" db="EMBL/GenBank/DDBJ databases">
        <title>Complete sequence of chromosome of Acidiphilium cryptum JF-5.</title>
        <authorList>
            <consortium name="US DOE Joint Genome Institute"/>
            <person name="Copeland A."/>
            <person name="Lucas S."/>
            <person name="Lapidus A."/>
            <person name="Barry K."/>
            <person name="Detter J.C."/>
            <person name="Glavina del Rio T."/>
            <person name="Hammon N."/>
            <person name="Israni S."/>
            <person name="Dalin E."/>
            <person name="Tice H."/>
            <person name="Pitluck S."/>
            <person name="Sims D."/>
            <person name="Brettin T."/>
            <person name="Bruce D."/>
            <person name="Han C."/>
            <person name="Schmutz J."/>
            <person name="Larimer F."/>
            <person name="Land M."/>
            <person name="Hauser L."/>
            <person name="Kyrpides N."/>
            <person name="Kim E."/>
            <person name="Magnuson T."/>
            <person name="Richardson P."/>
        </authorList>
    </citation>
    <scope>NUCLEOTIDE SEQUENCE [LARGE SCALE GENOMIC DNA]</scope>
    <source>
        <strain>JF-5</strain>
    </source>
</reference>
<evidence type="ECO:0000255" key="1">
    <source>
        <dbReference type="HAMAP-Rule" id="MF_01322"/>
    </source>
</evidence>